<proteinExistence type="inferred from homology"/>
<feature type="chain" id="PRO_1000056246" description="Ubiquinone/menaquinone biosynthesis C-methyltransferase UbiE">
    <location>
        <begin position="1"/>
        <end position="251"/>
    </location>
</feature>
<feature type="binding site" evidence="1">
    <location>
        <position position="74"/>
    </location>
    <ligand>
        <name>S-adenosyl-L-methionine</name>
        <dbReference type="ChEBI" id="CHEBI:59789"/>
    </ligand>
</feature>
<feature type="binding site" evidence="1">
    <location>
        <position position="95"/>
    </location>
    <ligand>
        <name>S-adenosyl-L-methionine</name>
        <dbReference type="ChEBI" id="CHEBI:59789"/>
    </ligand>
</feature>
<feature type="binding site" evidence="1">
    <location>
        <begin position="123"/>
        <end position="124"/>
    </location>
    <ligand>
        <name>S-adenosyl-L-methionine</name>
        <dbReference type="ChEBI" id="CHEBI:59789"/>
    </ligand>
</feature>
<feature type="binding site" evidence="1">
    <location>
        <position position="140"/>
    </location>
    <ligand>
        <name>S-adenosyl-L-methionine</name>
        <dbReference type="ChEBI" id="CHEBI:59789"/>
    </ligand>
</feature>
<reference key="1">
    <citation type="journal article" date="2006" name="Proc. Natl. Acad. Sci. U.S.A.">
        <title>Identification of genes subject to positive selection in uropathogenic strains of Escherichia coli: a comparative genomics approach.</title>
        <authorList>
            <person name="Chen S.L."/>
            <person name="Hung C.-S."/>
            <person name="Xu J."/>
            <person name="Reigstad C.S."/>
            <person name="Magrini V."/>
            <person name="Sabo A."/>
            <person name="Blasiar D."/>
            <person name="Bieri T."/>
            <person name="Meyer R.R."/>
            <person name="Ozersky P."/>
            <person name="Armstrong J.R."/>
            <person name="Fulton R.S."/>
            <person name="Latreille J.P."/>
            <person name="Spieth J."/>
            <person name="Hooton T.M."/>
            <person name="Mardis E.R."/>
            <person name="Hultgren S.J."/>
            <person name="Gordon J.I."/>
        </authorList>
    </citation>
    <scope>NUCLEOTIDE SEQUENCE [LARGE SCALE GENOMIC DNA]</scope>
    <source>
        <strain>UTI89 / UPEC</strain>
    </source>
</reference>
<keyword id="KW-0474">Menaquinone biosynthesis</keyword>
<keyword id="KW-0489">Methyltransferase</keyword>
<keyword id="KW-0949">S-adenosyl-L-methionine</keyword>
<keyword id="KW-0808">Transferase</keyword>
<keyword id="KW-0831">Ubiquinone biosynthesis</keyword>
<sequence>MVDKSQETTHFGFQTVAKEQKADMVAHVFHSVASKYDVMNDLMSFGIHRLWKRFTIDCSGVRRGQTVLDLAGGTGDLTAKFSRLVGETGKVVLADINESMLKMGREKLRNIGVIGNVEYVQANAEALPFPDNTFDCITISFGLRNVTDKDKALRSMYRVLKPGGRLLVLEFSKPIIEPLSKAYDAYSFHVLPRIGSLVANDADSYRYLAESIRMHPDQDTLKTMMQDAGFESVDYYNLTAGVVALHRGYKF</sequence>
<protein>
    <recommendedName>
        <fullName evidence="1">Ubiquinone/menaquinone biosynthesis C-methyltransferase UbiE</fullName>
        <ecNumber evidence="1">2.1.1.163</ecNumber>
        <ecNumber evidence="1">2.1.1.201</ecNumber>
    </recommendedName>
    <alternativeName>
        <fullName evidence="1">2-methoxy-6-polyprenyl-1,4-benzoquinol methylase</fullName>
    </alternativeName>
    <alternativeName>
        <fullName evidence="1">Demethylmenaquinone methyltransferase</fullName>
    </alternativeName>
</protein>
<name>UBIE_ECOUT</name>
<comment type="function">
    <text evidence="1">Methyltransferase required for the conversion of demethylmenaquinol (DMKH2) to menaquinol (MKH2) and the conversion of 2-polyprenyl-6-methoxy-1,4-benzoquinol (DDMQH2) to 2-polyprenyl-3-methyl-6-methoxy-1,4-benzoquinol (DMQH2).</text>
</comment>
<comment type="catalytic activity">
    <reaction evidence="1">
        <text>a 2-demethylmenaquinol + S-adenosyl-L-methionine = a menaquinol + S-adenosyl-L-homocysteine + H(+)</text>
        <dbReference type="Rhea" id="RHEA:42640"/>
        <dbReference type="Rhea" id="RHEA-COMP:9539"/>
        <dbReference type="Rhea" id="RHEA-COMP:9563"/>
        <dbReference type="ChEBI" id="CHEBI:15378"/>
        <dbReference type="ChEBI" id="CHEBI:18151"/>
        <dbReference type="ChEBI" id="CHEBI:55437"/>
        <dbReference type="ChEBI" id="CHEBI:57856"/>
        <dbReference type="ChEBI" id="CHEBI:59789"/>
        <dbReference type="EC" id="2.1.1.163"/>
    </reaction>
</comment>
<comment type="catalytic activity">
    <reaction evidence="1">
        <text>a 2-methoxy-6-(all-trans-polyprenyl)benzene-1,4-diol + S-adenosyl-L-methionine = a 5-methoxy-2-methyl-3-(all-trans-polyprenyl)benzene-1,4-diol + S-adenosyl-L-homocysteine + H(+)</text>
        <dbReference type="Rhea" id="RHEA:28286"/>
        <dbReference type="Rhea" id="RHEA-COMP:10858"/>
        <dbReference type="Rhea" id="RHEA-COMP:10859"/>
        <dbReference type="ChEBI" id="CHEBI:15378"/>
        <dbReference type="ChEBI" id="CHEBI:57856"/>
        <dbReference type="ChEBI" id="CHEBI:59789"/>
        <dbReference type="ChEBI" id="CHEBI:84166"/>
        <dbReference type="ChEBI" id="CHEBI:84167"/>
        <dbReference type="EC" id="2.1.1.201"/>
    </reaction>
</comment>
<comment type="pathway">
    <text evidence="1">Quinol/quinone metabolism; menaquinone biosynthesis; menaquinol from 1,4-dihydroxy-2-naphthoate: step 2/2.</text>
</comment>
<comment type="pathway">
    <text evidence="1">Cofactor biosynthesis; ubiquinone biosynthesis.</text>
</comment>
<comment type="similarity">
    <text evidence="1">Belongs to the class I-like SAM-binding methyltransferase superfamily. MenG/UbiE family.</text>
</comment>
<accession>Q1R477</accession>
<gene>
    <name evidence="1" type="primary">ubiE</name>
    <name type="ordered locus">UTI89_C4420</name>
</gene>
<dbReference type="EC" id="2.1.1.163" evidence="1"/>
<dbReference type="EC" id="2.1.1.201" evidence="1"/>
<dbReference type="EMBL" id="CP000243">
    <property type="protein sequence ID" value="ABE09837.1"/>
    <property type="molecule type" value="Genomic_DNA"/>
</dbReference>
<dbReference type="RefSeq" id="WP_000227959.1">
    <property type="nucleotide sequence ID" value="NZ_CP064825.1"/>
</dbReference>
<dbReference type="SMR" id="Q1R477"/>
<dbReference type="KEGG" id="eci:UTI89_C4420"/>
<dbReference type="HOGENOM" id="CLU_037990_0_0_6"/>
<dbReference type="UniPathway" id="UPA00079">
    <property type="reaction ID" value="UER00169"/>
</dbReference>
<dbReference type="UniPathway" id="UPA00232"/>
<dbReference type="Proteomes" id="UP000001952">
    <property type="component" value="Chromosome"/>
</dbReference>
<dbReference type="GO" id="GO:0008425">
    <property type="term" value="F:2-methoxy-6-polyprenyl-1,4-benzoquinol methyltransferase activity"/>
    <property type="evidence" value="ECO:0007669"/>
    <property type="project" value="UniProtKB-UniRule"/>
</dbReference>
<dbReference type="GO" id="GO:0043770">
    <property type="term" value="F:demethylmenaquinone methyltransferase activity"/>
    <property type="evidence" value="ECO:0007669"/>
    <property type="project" value="UniProtKB-UniRule"/>
</dbReference>
<dbReference type="GO" id="GO:0009060">
    <property type="term" value="P:aerobic respiration"/>
    <property type="evidence" value="ECO:0007669"/>
    <property type="project" value="UniProtKB-UniRule"/>
</dbReference>
<dbReference type="GO" id="GO:0009234">
    <property type="term" value="P:menaquinone biosynthetic process"/>
    <property type="evidence" value="ECO:0007669"/>
    <property type="project" value="UniProtKB-UniRule"/>
</dbReference>
<dbReference type="GO" id="GO:0032259">
    <property type="term" value="P:methylation"/>
    <property type="evidence" value="ECO:0007669"/>
    <property type="project" value="UniProtKB-KW"/>
</dbReference>
<dbReference type="CDD" id="cd02440">
    <property type="entry name" value="AdoMet_MTases"/>
    <property type="match status" value="1"/>
</dbReference>
<dbReference type="FunFam" id="3.40.50.150:FF:000014">
    <property type="entry name" value="Ubiquinone/menaquinone biosynthesis C-methyltransferase UbiE"/>
    <property type="match status" value="1"/>
</dbReference>
<dbReference type="Gene3D" id="3.40.50.150">
    <property type="entry name" value="Vaccinia Virus protein VP39"/>
    <property type="match status" value="1"/>
</dbReference>
<dbReference type="HAMAP" id="MF_01813">
    <property type="entry name" value="MenG_UbiE_methyltr"/>
    <property type="match status" value="1"/>
</dbReference>
<dbReference type="InterPro" id="IPR029063">
    <property type="entry name" value="SAM-dependent_MTases_sf"/>
</dbReference>
<dbReference type="InterPro" id="IPR004033">
    <property type="entry name" value="UbiE/COQ5_MeTrFase"/>
</dbReference>
<dbReference type="InterPro" id="IPR023576">
    <property type="entry name" value="UbiE/COQ5_MeTrFase_CS"/>
</dbReference>
<dbReference type="NCBIfam" id="TIGR01934">
    <property type="entry name" value="MenG_MenH_UbiE"/>
    <property type="match status" value="1"/>
</dbReference>
<dbReference type="NCBIfam" id="NF001240">
    <property type="entry name" value="PRK00216.1-1"/>
    <property type="match status" value="1"/>
</dbReference>
<dbReference type="NCBIfam" id="NF001242">
    <property type="entry name" value="PRK00216.1-3"/>
    <property type="match status" value="1"/>
</dbReference>
<dbReference type="NCBIfam" id="NF001244">
    <property type="entry name" value="PRK00216.1-5"/>
    <property type="match status" value="1"/>
</dbReference>
<dbReference type="PANTHER" id="PTHR43591:SF24">
    <property type="entry name" value="2-METHOXY-6-POLYPRENYL-1,4-BENZOQUINOL METHYLASE, MITOCHONDRIAL"/>
    <property type="match status" value="1"/>
</dbReference>
<dbReference type="PANTHER" id="PTHR43591">
    <property type="entry name" value="METHYLTRANSFERASE"/>
    <property type="match status" value="1"/>
</dbReference>
<dbReference type="Pfam" id="PF01209">
    <property type="entry name" value="Ubie_methyltran"/>
    <property type="match status" value="1"/>
</dbReference>
<dbReference type="SUPFAM" id="SSF53335">
    <property type="entry name" value="S-adenosyl-L-methionine-dependent methyltransferases"/>
    <property type="match status" value="1"/>
</dbReference>
<dbReference type="PROSITE" id="PS51608">
    <property type="entry name" value="SAM_MT_UBIE"/>
    <property type="match status" value="1"/>
</dbReference>
<dbReference type="PROSITE" id="PS01183">
    <property type="entry name" value="UBIE_1"/>
    <property type="match status" value="1"/>
</dbReference>
<dbReference type="PROSITE" id="PS01184">
    <property type="entry name" value="UBIE_2"/>
    <property type="match status" value="1"/>
</dbReference>
<evidence type="ECO:0000255" key="1">
    <source>
        <dbReference type="HAMAP-Rule" id="MF_01813"/>
    </source>
</evidence>
<organism>
    <name type="scientific">Escherichia coli (strain UTI89 / UPEC)</name>
    <dbReference type="NCBI Taxonomy" id="364106"/>
    <lineage>
        <taxon>Bacteria</taxon>
        <taxon>Pseudomonadati</taxon>
        <taxon>Pseudomonadota</taxon>
        <taxon>Gammaproteobacteria</taxon>
        <taxon>Enterobacterales</taxon>
        <taxon>Enterobacteriaceae</taxon>
        <taxon>Escherichia</taxon>
    </lineage>
</organism>